<accession>P9WHP3</accession>
<accession>L0TCN1</accession>
<accession>P65860</accession>
<accession>Q50728</accession>
<name>CRTB_MYCTU</name>
<gene>
    <name type="primary">crtB</name>
    <name type="synonym">phyA</name>
    <name type="ordered locus">Rv3397c</name>
    <name type="ORF">MTCY78.31</name>
</gene>
<evidence type="ECO:0000250" key="1"/>
<evidence type="ECO:0000305" key="2"/>
<proteinExistence type="evidence at protein level"/>
<dbReference type="EC" id="2.5.1.-"/>
<dbReference type="EMBL" id="AL123456">
    <property type="protein sequence ID" value="CCP46219.1"/>
    <property type="molecule type" value="Genomic_DNA"/>
</dbReference>
<dbReference type="PIR" id="B70735">
    <property type="entry name" value="B70735"/>
</dbReference>
<dbReference type="RefSeq" id="NP_217914.1">
    <property type="nucleotide sequence ID" value="NC_000962.3"/>
</dbReference>
<dbReference type="SMR" id="P9WHP3"/>
<dbReference type="FunCoup" id="P9WHP3">
    <property type="interactions" value="41"/>
</dbReference>
<dbReference type="STRING" id="83332.Rv3397c"/>
<dbReference type="PaxDb" id="83332-Rv3397c"/>
<dbReference type="DNASU" id="887911"/>
<dbReference type="GeneID" id="887911"/>
<dbReference type="KEGG" id="mtu:Rv3397c"/>
<dbReference type="KEGG" id="mtv:RVBD_3397c"/>
<dbReference type="TubercuList" id="Rv3397c"/>
<dbReference type="eggNOG" id="COG1562">
    <property type="taxonomic scope" value="Bacteria"/>
</dbReference>
<dbReference type="InParanoid" id="P9WHP3"/>
<dbReference type="OrthoDB" id="9807580at2"/>
<dbReference type="PhylomeDB" id="P9WHP3"/>
<dbReference type="UniPathway" id="UPA00799"/>
<dbReference type="Proteomes" id="UP000001584">
    <property type="component" value="Chromosome"/>
</dbReference>
<dbReference type="GO" id="GO:0046905">
    <property type="term" value="F:15-cis-phytoene synthase activity"/>
    <property type="evidence" value="ECO:0000250"/>
    <property type="project" value="UniProtKB"/>
</dbReference>
<dbReference type="GO" id="GO:0004311">
    <property type="term" value="F:geranylgeranyl diphosphate synthase activity"/>
    <property type="evidence" value="ECO:0007669"/>
    <property type="project" value="InterPro"/>
</dbReference>
<dbReference type="GO" id="GO:0046872">
    <property type="term" value="F:metal ion binding"/>
    <property type="evidence" value="ECO:0007669"/>
    <property type="project" value="UniProtKB-KW"/>
</dbReference>
<dbReference type="GO" id="GO:0051996">
    <property type="term" value="F:squalene synthase [NAD(P)H] activity"/>
    <property type="evidence" value="ECO:0007669"/>
    <property type="project" value="InterPro"/>
</dbReference>
<dbReference type="GO" id="GO:0016117">
    <property type="term" value="P:carotenoid biosynthetic process"/>
    <property type="evidence" value="ECO:0000250"/>
    <property type="project" value="UniProtKB"/>
</dbReference>
<dbReference type="CDD" id="cd00683">
    <property type="entry name" value="Trans_IPPS_HH"/>
    <property type="match status" value="1"/>
</dbReference>
<dbReference type="Gene3D" id="1.10.600.10">
    <property type="entry name" value="Farnesyl Diphosphate Synthase"/>
    <property type="match status" value="1"/>
</dbReference>
<dbReference type="InterPro" id="IPR008949">
    <property type="entry name" value="Isoprenoid_synthase_dom_sf"/>
</dbReference>
<dbReference type="InterPro" id="IPR017828">
    <property type="entry name" value="SQ_synth_HpnD-like"/>
</dbReference>
<dbReference type="InterPro" id="IPR002060">
    <property type="entry name" value="Squ/phyt_synthse"/>
</dbReference>
<dbReference type="InterPro" id="IPR019845">
    <property type="entry name" value="Squalene/phytoene_synthase_CS"/>
</dbReference>
<dbReference type="InterPro" id="IPR044843">
    <property type="entry name" value="Trans_IPPS_bact-type"/>
</dbReference>
<dbReference type="InterPro" id="IPR033904">
    <property type="entry name" value="Trans_IPPS_HH"/>
</dbReference>
<dbReference type="NCBIfam" id="TIGR03465">
    <property type="entry name" value="HpnD"/>
    <property type="match status" value="1"/>
</dbReference>
<dbReference type="PANTHER" id="PTHR31480">
    <property type="entry name" value="BIFUNCTIONAL LYCOPENE CYCLASE/PHYTOENE SYNTHASE"/>
    <property type="match status" value="1"/>
</dbReference>
<dbReference type="Pfam" id="PF00494">
    <property type="entry name" value="SQS_PSY"/>
    <property type="match status" value="1"/>
</dbReference>
<dbReference type="SFLD" id="SFLDS00005">
    <property type="entry name" value="Isoprenoid_Synthase_Type_I"/>
    <property type="match status" value="1"/>
</dbReference>
<dbReference type="SFLD" id="SFLDG01212">
    <property type="entry name" value="Phytoene_synthase_like"/>
    <property type="match status" value="1"/>
</dbReference>
<dbReference type="SUPFAM" id="SSF48576">
    <property type="entry name" value="Terpenoid synthases"/>
    <property type="match status" value="1"/>
</dbReference>
<dbReference type="PROSITE" id="PS01044">
    <property type="entry name" value="SQUALEN_PHYTOEN_SYN_1"/>
    <property type="match status" value="1"/>
</dbReference>
<dbReference type="PROSITE" id="PS01045">
    <property type="entry name" value="SQUALEN_PHYTOEN_SYN_2"/>
    <property type="match status" value="1"/>
</dbReference>
<reference key="1">
    <citation type="journal article" date="1998" name="Nature">
        <title>Deciphering the biology of Mycobacterium tuberculosis from the complete genome sequence.</title>
        <authorList>
            <person name="Cole S.T."/>
            <person name="Brosch R."/>
            <person name="Parkhill J."/>
            <person name="Garnier T."/>
            <person name="Churcher C.M."/>
            <person name="Harris D.E."/>
            <person name="Gordon S.V."/>
            <person name="Eiglmeier K."/>
            <person name="Gas S."/>
            <person name="Barry C.E. III"/>
            <person name="Tekaia F."/>
            <person name="Badcock K."/>
            <person name="Basham D."/>
            <person name="Brown D."/>
            <person name="Chillingworth T."/>
            <person name="Connor R."/>
            <person name="Davies R.M."/>
            <person name="Devlin K."/>
            <person name="Feltwell T."/>
            <person name="Gentles S."/>
            <person name="Hamlin N."/>
            <person name="Holroyd S."/>
            <person name="Hornsby T."/>
            <person name="Jagels K."/>
            <person name="Krogh A."/>
            <person name="McLean J."/>
            <person name="Moule S."/>
            <person name="Murphy L.D."/>
            <person name="Oliver S."/>
            <person name="Osborne J."/>
            <person name="Quail M.A."/>
            <person name="Rajandream M.A."/>
            <person name="Rogers J."/>
            <person name="Rutter S."/>
            <person name="Seeger K."/>
            <person name="Skelton S."/>
            <person name="Squares S."/>
            <person name="Squares R."/>
            <person name="Sulston J.E."/>
            <person name="Taylor K."/>
            <person name="Whitehead S."/>
            <person name="Barrell B.G."/>
        </authorList>
    </citation>
    <scope>NUCLEOTIDE SEQUENCE [LARGE SCALE GENOMIC DNA]</scope>
    <source>
        <strain>ATCC 25618 / H37Rv</strain>
    </source>
</reference>
<reference key="2">
    <citation type="journal article" date="2011" name="Mol. Cell. Proteomics">
        <title>Proteogenomic analysis of Mycobacterium tuberculosis by high resolution mass spectrometry.</title>
        <authorList>
            <person name="Kelkar D.S."/>
            <person name="Kumar D."/>
            <person name="Kumar P."/>
            <person name="Balakrishnan L."/>
            <person name="Muthusamy B."/>
            <person name="Yadav A.K."/>
            <person name="Shrivastava P."/>
            <person name="Marimuthu A."/>
            <person name="Anand S."/>
            <person name="Sundaram H."/>
            <person name="Kingsbury R."/>
            <person name="Harsha H.C."/>
            <person name="Nair B."/>
            <person name="Prasad T.S."/>
            <person name="Chauhan D.S."/>
            <person name="Katoch K."/>
            <person name="Katoch V.M."/>
            <person name="Kumar P."/>
            <person name="Chaerkady R."/>
            <person name="Ramachandran S."/>
            <person name="Dash D."/>
            <person name="Pandey A."/>
        </authorList>
    </citation>
    <scope>IDENTIFICATION BY MASS SPECTROMETRY [LARGE SCALE ANALYSIS]</scope>
    <source>
        <strain>ATCC 25618 / H37Rv</strain>
    </source>
</reference>
<keyword id="KW-0125">Carotenoid biosynthesis</keyword>
<keyword id="KW-0460">Magnesium</keyword>
<keyword id="KW-0464">Manganese</keyword>
<keyword id="KW-0479">Metal-binding</keyword>
<keyword id="KW-1185">Reference proteome</keyword>
<keyword id="KW-0808">Transferase</keyword>
<comment type="function">
    <text evidence="1">Involved in the biosynthesis of carotenoids. Catalyzes the condensation of two molecules of geranylgeranyl diphosphate (GGPP) to give prephytoene diphosphate (PPPP) and the subsequent rearrangement of the cyclopropylcarbinyl intermediate to yield phytoene (By similarity).</text>
</comment>
<comment type="cofactor">
    <cofactor evidence="1">
        <name>ATP</name>
        <dbReference type="ChEBI" id="CHEBI:30616"/>
    </cofactor>
    <text evidence="1">ATP is required for the transferase activity but it does not seem to be hydrolyzed during the reaction.</text>
</comment>
<comment type="cofactor">
    <cofactor evidence="1">
        <name>Mn(2+)</name>
        <dbReference type="ChEBI" id="CHEBI:29035"/>
    </cofactor>
    <cofactor evidence="1">
        <name>Mg(2+)</name>
        <dbReference type="ChEBI" id="CHEBI:18420"/>
    </cofactor>
</comment>
<comment type="pathway">
    <text>Carotenoid biosynthesis; phytoene biosynthesis.</text>
</comment>
<comment type="similarity">
    <text evidence="2">Belongs to the phytoene/squalene synthase family.</text>
</comment>
<organism>
    <name type="scientific">Mycobacterium tuberculosis (strain ATCC 25618 / H37Rv)</name>
    <dbReference type="NCBI Taxonomy" id="83332"/>
    <lineage>
        <taxon>Bacteria</taxon>
        <taxon>Bacillati</taxon>
        <taxon>Actinomycetota</taxon>
        <taxon>Actinomycetes</taxon>
        <taxon>Mycobacteriales</taxon>
        <taxon>Mycobacteriaceae</taxon>
        <taxon>Mycobacterium</taxon>
        <taxon>Mycobacterium tuberculosis complex</taxon>
    </lineage>
</organism>
<feature type="chain" id="PRO_0000067431" description="Phytoene synthase">
    <location>
        <begin position="1"/>
        <end position="302"/>
    </location>
</feature>
<protein>
    <recommendedName>
        <fullName>Phytoene synthase</fullName>
        <shortName>PSase</shortName>
        <ecNumber>2.5.1.-</ecNumber>
    </recommendedName>
</protein>
<sequence>MTEIEQAYRITESITRTAARNFYYGIRLLPREKRAALSAVYALGRRIDDVADGELAPETKITELDAIRKSLDNIDDSSDPVLVALADAARRFPVPIAMFAELIDGARMEIDWTGCRDFDELIVYCRRGAGTIGKLCLSIFGPVSTATSRYAEQLGIALQQTNILRDVREDFLNGRIYLPRDELDRLGVRLRLDDTGALDDPDGRLAALLRFSADRAADWYSLGLRLIPHLDRRSAACCAAMSGIYRRQLALIRASPAVVYDRRISLSGLKKAQVAAAALASSVTCGPAHGPLPADLGSHPSH</sequence>